<sequence>MAANAFVRARIDEDLKNQAADVLAGMGLTISDLVRITLTKVAREKALPFDLREPNQLTIQSIKNSEAGVDVHKAKDADDLFDKLGI</sequence>
<dbReference type="EMBL" id="CP001665">
    <property type="protein sequence ID" value="ACT30396.1"/>
    <property type="molecule type" value="Genomic_DNA"/>
</dbReference>
<dbReference type="RefSeq" id="WP_000729704.1">
    <property type="nucleotide sequence ID" value="NZ_JADXDS010000051.1"/>
</dbReference>
<dbReference type="PDB" id="4ML0">
    <property type="method" value="X-ray"/>
    <property type="resolution" value="2.10 A"/>
    <property type="chains" value="A/C/E/G/I/K/M/O=1-86"/>
</dbReference>
<dbReference type="PDBsum" id="4ML0"/>
<dbReference type="SMR" id="A0A140ND86"/>
<dbReference type="GeneID" id="93777169"/>
<dbReference type="KEGG" id="ebd:ECBD_3396"/>
<dbReference type="KEGG" id="ebe:B21_00225"/>
<dbReference type="KEGG" id="ebl:ECD_00221"/>
<dbReference type="PATRIC" id="fig|469008.15.peg.225"/>
<dbReference type="eggNOG" id="COG3077">
    <property type="taxonomic scope" value="Bacteria"/>
</dbReference>
<dbReference type="HOGENOM" id="CLU_154558_12_2_6"/>
<dbReference type="EvolutionaryTrace" id="A0A140ND86"/>
<dbReference type="GO" id="GO:0000987">
    <property type="term" value="F:cis-regulatory region sequence-specific DNA binding"/>
    <property type="evidence" value="ECO:0007669"/>
    <property type="project" value="InterPro"/>
</dbReference>
<dbReference type="GO" id="GO:0015643">
    <property type="term" value="F:toxic substance binding"/>
    <property type="evidence" value="ECO:0007669"/>
    <property type="project" value="InterPro"/>
</dbReference>
<dbReference type="GO" id="GO:0006351">
    <property type="term" value="P:DNA-templated transcription"/>
    <property type="evidence" value="ECO:0007669"/>
    <property type="project" value="TreeGrafter"/>
</dbReference>
<dbReference type="GO" id="GO:0006355">
    <property type="term" value="P:regulation of DNA-templated transcription"/>
    <property type="evidence" value="ECO:0007669"/>
    <property type="project" value="InterPro"/>
</dbReference>
<dbReference type="GO" id="GO:0044010">
    <property type="term" value="P:single-species biofilm formation"/>
    <property type="evidence" value="ECO:0007669"/>
    <property type="project" value="InterPro"/>
</dbReference>
<dbReference type="FunFam" id="1.10.1220.10:FF:000007">
    <property type="entry name" value="Addiction module antitoxin, RelB/DinJ family"/>
    <property type="match status" value="1"/>
</dbReference>
<dbReference type="Gene3D" id="1.10.1220.10">
    <property type="entry name" value="Met repressor-like"/>
    <property type="match status" value="1"/>
</dbReference>
<dbReference type="InterPro" id="IPR013321">
    <property type="entry name" value="Arc_rbn_hlx_hlx"/>
</dbReference>
<dbReference type="InterPro" id="IPR026262">
    <property type="entry name" value="DinJ"/>
</dbReference>
<dbReference type="InterPro" id="IPR007337">
    <property type="entry name" value="RelB/DinJ"/>
</dbReference>
<dbReference type="NCBIfam" id="TIGR02384">
    <property type="entry name" value="RelB_DinJ"/>
    <property type="match status" value="1"/>
</dbReference>
<dbReference type="PANTHER" id="PTHR38781">
    <property type="entry name" value="ANTITOXIN DINJ-RELATED"/>
    <property type="match status" value="1"/>
</dbReference>
<dbReference type="PANTHER" id="PTHR38781:SF1">
    <property type="entry name" value="ANTITOXIN DINJ-RELATED"/>
    <property type="match status" value="1"/>
</dbReference>
<dbReference type="Pfam" id="PF04221">
    <property type="entry name" value="RelB"/>
    <property type="match status" value="1"/>
</dbReference>
<dbReference type="PIRSF" id="PIRSF003108">
    <property type="entry name" value="DinJ"/>
    <property type="match status" value="1"/>
</dbReference>
<comment type="function">
    <text evidence="1 2">Antitoxin component of a type II toxin-antitoxin (TA) system (PubMed:24923448). A labile antitoxin that counteracts the effect of cognate toxin YafQ (PubMed:24923448). The YafQ-DinJ heterotetramer binds the consensus sequence 5'-TTTGAGCTACA-3' in the dinJ promoter; DinJ also binds DNA but not as well as the YafQ-DinJ complex (PubMed:24923448). Binding to the dinJ represses expression of the promoter (By similarity).</text>
</comment>
<comment type="subunit">
    <text evidence="2">Probably a dimer in solution, forms a heterotetramer with antitoxin DinJ, with 2 YafQ-DinJ dimers associated via the N-terminus of the DinJ antitoxins (YafQ-(DinJ)2-YafQ) (PubMed:24923448).</text>
</comment>
<comment type="similarity">
    <text evidence="3">Belongs to the RelB/DinJ antitoxin family.</text>
</comment>
<protein>
    <recommendedName>
        <fullName>Antitoxin DinJ</fullName>
    </recommendedName>
</protein>
<organism>
    <name type="scientific">Escherichia coli (strain B / BL21-DE3)</name>
    <dbReference type="NCBI Taxonomy" id="469008"/>
    <lineage>
        <taxon>Bacteria</taxon>
        <taxon>Pseudomonadati</taxon>
        <taxon>Pseudomonadota</taxon>
        <taxon>Gammaproteobacteria</taxon>
        <taxon>Enterobacterales</taxon>
        <taxon>Enterobacteriaceae</taxon>
        <taxon>Escherichia</taxon>
    </lineage>
</organism>
<gene>
    <name type="primary">dinJ</name>
    <name type="ordered locus">ECBD_3396</name>
</gene>
<keyword id="KW-0002">3D-structure</keyword>
<keyword id="KW-0238">DNA-binding</keyword>
<keyword id="KW-0678">Repressor</keyword>
<keyword id="KW-1277">Toxin-antitoxin system</keyword>
<keyword id="KW-0804">Transcription</keyword>
<keyword id="KW-0805">Transcription regulation</keyword>
<reference key="1">
    <citation type="submission" date="2009-07" db="EMBL/GenBank/DDBJ databases">
        <title>Complete sequence of Escherichia coli BL21(DE3).</title>
        <authorList>
            <person name="Lucas S."/>
            <person name="Copeland A."/>
            <person name="Lapidus A."/>
            <person name="Glavina del Rio T."/>
            <person name="Dalin E."/>
            <person name="Tice H."/>
            <person name="Bruce D."/>
            <person name="Goodwin L."/>
            <person name="Pitluck S."/>
            <person name="LaButti K.M."/>
            <person name="Clum A."/>
            <person name="Larimer F."/>
            <person name="Land M."/>
            <person name="Hauser L."/>
            <person name="Kyrpides N."/>
            <person name="Anderson I."/>
            <person name="Sorek R."/>
            <person name="Rubin E."/>
        </authorList>
    </citation>
    <scope>NUCLEOTIDE SEQUENCE [LARGE SCALE GENOMIC DNA]</scope>
    <source>
        <strain>B / BL21-DE3</strain>
    </source>
</reference>
<reference evidence="4" key="2">
    <citation type="journal article" date="2014" name="J. Biol. Chem.">
        <title>Structural and functional characterization of Escherichia coli toxin-antitoxin complex DinJ-YafQ.</title>
        <authorList>
            <person name="Liang Y."/>
            <person name="Gao Z."/>
            <person name="Wang F."/>
            <person name="Zhang Y."/>
            <person name="Dong Y."/>
            <person name="Liu Q."/>
        </authorList>
    </citation>
    <scope>X-RAY CRYSTALLOGRAPHY (2.10 ANGSTROMS) IN COMPLEX WITH YAFQ</scope>
    <scope>FUNCTION</scope>
    <scope>SUBUNIT</scope>
    <scope>DNA-BINDING</scope>
    <scope>MUTAGENESIS OF ARG-8; LYS-16; 31-SER--ARG-35; PHE-49 AND 59-ILE--ILE-62</scope>
    <source>
        <strain>B / BL21-DE3</strain>
    </source>
</reference>
<proteinExistence type="evidence at protein level"/>
<name>DINJ_ECOBD</name>
<evidence type="ECO:0000250" key="1">
    <source>
        <dbReference type="UniProtKB" id="Q47150"/>
    </source>
</evidence>
<evidence type="ECO:0000269" key="2">
    <source>
    </source>
</evidence>
<evidence type="ECO:0000305" key="3"/>
<evidence type="ECO:0007744" key="4">
    <source>
        <dbReference type="PDB" id="4ML0"/>
    </source>
</evidence>
<evidence type="ECO:0007829" key="5">
    <source>
        <dbReference type="PDB" id="4ML0"/>
    </source>
</evidence>
<feature type="chain" id="PRO_0000440936" description="Antitoxin DinJ">
    <location>
        <begin position="1"/>
        <end position="86"/>
    </location>
</feature>
<feature type="mutagenesis site" description="Does not bind to dinJ promoter; when associated with A-16." evidence="2">
    <original>R</original>
    <variation>A</variation>
    <location>
        <position position="8"/>
    </location>
</feature>
<feature type="mutagenesis site" description="Does not bind to dinJ promoter; when associated with A-8." evidence="2">
    <original>K</original>
    <variation>A</variation>
    <location>
        <position position="16"/>
    </location>
</feature>
<feature type="mutagenesis site" description="Does not bind to dinJ promoter." evidence="2">
    <original>SDLVR</original>
    <variation>ADLVA</variation>
    <location>
        <begin position="31"/>
        <end position="35"/>
    </location>
</feature>
<feature type="mutagenesis site" description="No effect in vivo, in vitro forms a complex with toxin YafQ which is not able to cleave RNA, i.e. does not release YafQ. YafQ-DinJ complex binds DNA." evidence="2">
    <original>F</original>
    <variation>A</variation>
    <location>
        <position position="49"/>
    </location>
</feature>
<feature type="mutagenesis site" description="No effect in vivo, in vitro forms a complex with toxin YafQ which is still able to cleave RNA, i.e. has lost antitoxin activity. YafQ-DinJ complex binds DNA." evidence="2">
    <original>IQSI</original>
    <variation>NQSN</variation>
    <location>
        <begin position="59"/>
        <end position="62"/>
    </location>
</feature>
<feature type="strand" evidence="5">
    <location>
        <begin position="4"/>
        <end position="10"/>
    </location>
</feature>
<feature type="helix" evidence="5">
    <location>
        <begin position="13"/>
        <end position="24"/>
    </location>
</feature>
<feature type="turn" evidence="5">
    <location>
        <begin position="25"/>
        <end position="27"/>
    </location>
</feature>
<feature type="helix" evidence="5">
    <location>
        <begin position="30"/>
        <end position="44"/>
    </location>
</feature>
<feature type="helix" evidence="5">
    <location>
        <begin position="56"/>
        <end position="67"/>
    </location>
</feature>
<feature type="turn" evidence="5">
    <location>
        <begin position="68"/>
        <end position="70"/>
    </location>
</feature>
<feature type="strand" evidence="5">
    <location>
        <begin position="71"/>
        <end position="76"/>
    </location>
</feature>
<feature type="helix" evidence="5">
    <location>
        <begin position="77"/>
        <end position="84"/>
    </location>
</feature>
<accession>A0A140ND86</accession>